<protein>
    <recommendedName>
        <fullName evidence="1">GTP cyclohydrolase FolE2</fullName>
        <ecNumber evidence="1">3.5.4.16</ecNumber>
    </recommendedName>
</protein>
<reference key="1">
    <citation type="journal article" date="2010" name="Genome Biol. Evol.">
        <title>Continuing evolution of Burkholderia mallei through genome reduction and large-scale rearrangements.</title>
        <authorList>
            <person name="Losada L."/>
            <person name="Ronning C.M."/>
            <person name="DeShazer D."/>
            <person name="Woods D."/>
            <person name="Fedorova N."/>
            <person name="Kim H.S."/>
            <person name="Shabalina S.A."/>
            <person name="Pearson T.R."/>
            <person name="Brinkac L."/>
            <person name="Tan P."/>
            <person name="Nandi T."/>
            <person name="Crabtree J."/>
            <person name="Badger J."/>
            <person name="Beckstrom-Sternberg S."/>
            <person name="Saqib M."/>
            <person name="Schutzer S.E."/>
            <person name="Keim P."/>
            <person name="Nierman W.C."/>
        </authorList>
    </citation>
    <scope>NUCLEOTIDE SEQUENCE [LARGE SCALE GENOMIC DNA]</scope>
    <source>
        <strain>1106a</strain>
    </source>
</reference>
<sequence>MNLMNPEFAMPDVQSTVDTRQMPIQRVGVRAVRHPLTVRTAEGETQATVGTWNLDVHLPADQKGTHMSRFVALLEERGGPLTADAFRTMLATMLEKLEARAGRIEVSFPYFVNKTAPVSGVRSLLDYEVTLTGDVRDGLTRVFAKVLVPVTSLCPCSKKISQYGAHNQRSHVTIDAELAADVPVEDLIRIAEEEASCELWGLLKRPDEKFVTERAYENPKFVEDLVRDVARRLDADERIVAYVLEAENFESIHNHSAYALIERDKRRGA</sequence>
<keyword id="KW-0378">Hydrolase</keyword>
<accession>A3P7W3</accession>
<feature type="chain" id="PRO_0000297504" description="GTP cyclohydrolase FolE2">
    <location>
        <begin position="1"/>
        <end position="269"/>
    </location>
</feature>
<feature type="site" description="May be catalytically important" evidence="1">
    <location>
        <position position="154"/>
    </location>
</feature>
<dbReference type="EC" id="3.5.4.16" evidence="1"/>
<dbReference type="EMBL" id="CP000573">
    <property type="protein sequence ID" value="ABN93081.1"/>
    <property type="molecule type" value="Genomic_DNA"/>
</dbReference>
<dbReference type="RefSeq" id="WP_004195713.1">
    <property type="nucleotide sequence ID" value="NC_009078.1"/>
</dbReference>
<dbReference type="SMR" id="A3P7W3"/>
<dbReference type="GeneID" id="93063968"/>
<dbReference type="KEGG" id="bpl:BURPS1106A_A2391"/>
<dbReference type="HOGENOM" id="CLU_062816_1_1_4"/>
<dbReference type="UniPathway" id="UPA00848">
    <property type="reaction ID" value="UER00151"/>
</dbReference>
<dbReference type="Proteomes" id="UP000006738">
    <property type="component" value="Chromosome II"/>
</dbReference>
<dbReference type="GO" id="GO:0003934">
    <property type="term" value="F:GTP cyclohydrolase I activity"/>
    <property type="evidence" value="ECO:0007669"/>
    <property type="project" value="UniProtKB-UniRule"/>
</dbReference>
<dbReference type="GO" id="GO:0046654">
    <property type="term" value="P:tetrahydrofolate biosynthetic process"/>
    <property type="evidence" value="ECO:0007669"/>
    <property type="project" value="UniProtKB-UniRule"/>
</dbReference>
<dbReference type="Gene3D" id="3.10.270.10">
    <property type="entry name" value="Urate Oxidase"/>
    <property type="match status" value="1"/>
</dbReference>
<dbReference type="HAMAP" id="MF_01527_B">
    <property type="entry name" value="GTP_cyclohydrol_B"/>
    <property type="match status" value="1"/>
</dbReference>
<dbReference type="InterPro" id="IPR022838">
    <property type="entry name" value="GTP_cyclohydrolase_FolE2"/>
</dbReference>
<dbReference type="InterPro" id="IPR003801">
    <property type="entry name" value="GTP_cyclohydrolase_FolE2/MptA"/>
</dbReference>
<dbReference type="NCBIfam" id="NF010200">
    <property type="entry name" value="PRK13674.1-1"/>
    <property type="match status" value="1"/>
</dbReference>
<dbReference type="PANTHER" id="PTHR36445">
    <property type="entry name" value="GTP CYCLOHYDROLASE MPTA"/>
    <property type="match status" value="1"/>
</dbReference>
<dbReference type="PANTHER" id="PTHR36445:SF1">
    <property type="entry name" value="GTP CYCLOHYDROLASE MPTA"/>
    <property type="match status" value="1"/>
</dbReference>
<dbReference type="Pfam" id="PF02649">
    <property type="entry name" value="GCHY-1"/>
    <property type="match status" value="1"/>
</dbReference>
<name>GCH4_BURP0</name>
<organism>
    <name type="scientific">Burkholderia pseudomallei (strain 1106a)</name>
    <dbReference type="NCBI Taxonomy" id="357348"/>
    <lineage>
        <taxon>Bacteria</taxon>
        <taxon>Pseudomonadati</taxon>
        <taxon>Pseudomonadota</taxon>
        <taxon>Betaproteobacteria</taxon>
        <taxon>Burkholderiales</taxon>
        <taxon>Burkholderiaceae</taxon>
        <taxon>Burkholderia</taxon>
        <taxon>pseudomallei group</taxon>
    </lineage>
</organism>
<proteinExistence type="inferred from homology"/>
<evidence type="ECO:0000255" key="1">
    <source>
        <dbReference type="HAMAP-Rule" id="MF_01527"/>
    </source>
</evidence>
<gene>
    <name evidence="1" type="primary">folE2</name>
    <name type="ordered locus">BURPS1106A_A2391</name>
</gene>
<comment type="function">
    <text evidence="1">Converts GTP to 7,8-dihydroneopterin triphosphate.</text>
</comment>
<comment type="catalytic activity">
    <reaction evidence="1">
        <text>GTP + H2O = 7,8-dihydroneopterin 3'-triphosphate + formate + H(+)</text>
        <dbReference type="Rhea" id="RHEA:17473"/>
        <dbReference type="ChEBI" id="CHEBI:15377"/>
        <dbReference type="ChEBI" id="CHEBI:15378"/>
        <dbReference type="ChEBI" id="CHEBI:15740"/>
        <dbReference type="ChEBI" id="CHEBI:37565"/>
        <dbReference type="ChEBI" id="CHEBI:58462"/>
        <dbReference type="EC" id="3.5.4.16"/>
    </reaction>
</comment>
<comment type="pathway">
    <text evidence="1">Cofactor biosynthesis; 7,8-dihydroneopterin triphosphate biosynthesis; 7,8-dihydroneopterin triphosphate from GTP: step 1/1.</text>
</comment>
<comment type="similarity">
    <text evidence="1">Belongs to the GTP cyclohydrolase IV family.</text>
</comment>